<dbReference type="EC" id="6.3.2.6"/>
<dbReference type="EMBL" id="AE005174">
    <property type="protein sequence ID" value="AAG57586.1"/>
    <property type="molecule type" value="Genomic_DNA"/>
</dbReference>
<dbReference type="EMBL" id="BA000007">
    <property type="protein sequence ID" value="BAB36761.1"/>
    <property type="molecule type" value="Genomic_DNA"/>
</dbReference>
<dbReference type="PIR" id="B91046">
    <property type="entry name" value="B91046"/>
</dbReference>
<dbReference type="PIR" id="F85890">
    <property type="entry name" value="F85890"/>
</dbReference>
<dbReference type="RefSeq" id="NP_311365.1">
    <property type="nucleotide sequence ID" value="NC_002695.1"/>
</dbReference>
<dbReference type="RefSeq" id="WP_001295467.1">
    <property type="nucleotide sequence ID" value="NZ_VOAI01000001.1"/>
</dbReference>
<dbReference type="SMR" id="P0A7D9"/>
<dbReference type="STRING" id="155864.Z3735"/>
<dbReference type="GeneID" id="89517285"/>
<dbReference type="GeneID" id="915199"/>
<dbReference type="KEGG" id="ece:Z3735"/>
<dbReference type="KEGG" id="ecs:ECs_3338"/>
<dbReference type="PATRIC" id="fig|386585.9.peg.3486"/>
<dbReference type="eggNOG" id="COG0152">
    <property type="taxonomic scope" value="Bacteria"/>
</dbReference>
<dbReference type="HOGENOM" id="CLU_061495_2_1_6"/>
<dbReference type="OMA" id="EFCYKND"/>
<dbReference type="UniPathway" id="UPA00074">
    <property type="reaction ID" value="UER00131"/>
</dbReference>
<dbReference type="Proteomes" id="UP000000558">
    <property type="component" value="Chromosome"/>
</dbReference>
<dbReference type="Proteomes" id="UP000002519">
    <property type="component" value="Chromosome"/>
</dbReference>
<dbReference type="GO" id="GO:0005829">
    <property type="term" value="C:cytosol"/>
    <property type="evidence" value="ECO:0007669"/>
    <property type="project" value="TreeGrafter"/>
</dbReference>
<dbReference type="GO" id="GO:0005524">
    <property type="term" value="F:ATP binding"/>
    <property type="evidence" value="ECO:0007669"/>
    <property type="project" value="UniProtKB-KW"/>
</dbReference>
<dbReference type="GO" id="GO:0004639">
    <property type="term" value="F:phosphoribosylaminoimidazolesuccinocarboxamide synthase activity"/>
    <property type="evidence" value="ECO:0007669"/>
    <property type="project" value="UniProtKB-UniRule"/>
</dbReference>
<dbReference type="GO" id="GO:0006189">
    <property type="term" value="P:'de novo' IMP biosynthetic process"/>
    <property type="evidence" value="ECO:0007669"/>
    <property type="project" value="UniProtKB-UniRule"/>
</dbReference>
<dbReference type="GO" id="GO:0009236">
    <property type="term" value="P:cobalamin biosynthetic process"/>
    <property type="evidence" value="ECO:0007669"/>
    <property type="project" value="InterPro"/>
</dbReference>
<dbReference type="CDD" id="cd01415">
    <property type="entry name" value="SAICAR_synt_PurC"/>
    <property type="match status" value="1"/>
</dbReference>
<dbReference type="FunFam" id="3.30.200.20:FF:000086">
    <property type="entry name" value="Phosphoribosylaminoimidazole-succinocarboxamide synthase"/>
    <property type="match status" value="1"/>
</dbReference>
<dbReference type="FunFam" id="3.30.470.20:FF:000006">
    <property type="entry name" value="Phosphoribosylaminoimidazole-succinocarboxamide synthase"/>
    <property type="match status" value="1"/>
</dbReference>
<dbReference type="Gene3D" id="3.30.470.20">
    <property type="entry name" value="ATP-grasp fold, B domain"/>
    <property type="match status" value="1"/>
</dbReference>
<dbReference type="Gene3D" id="3.30.200.20">
    <property type="entry name" value="Phosphorylase Kinase, domain 1"/>
    <property type="match status" value="1"/>
</dbReference>
<dbReference type="HAMAP" id="MF_00137">
    <property type="entry name" value="SAICAR_synth"/>
    <property type="match status" value="1"/>
</dbReference>
<dbReference type="InterPro" id="IPR028923">
    <property type="entry name" value="SAICAR_synt/ADE2_N"/>
</dbReference>
<dbReference type="InterPro" id="IPR033934">
    <property type="entry name" value="SAICAR_synt_PurC"/>
</dbReference>
<dbReference type="InterPro" id="IPR001636">
    <property type="entry name" value="SAICAR_synth"/>
</dbReference>
<dbReference type="InterPro" id="IPR050089">
    <property type="entry name" value="SAICAR_synthetase"/>
</dbReference>
<dbReference type="InterPro" id="IPR018236">
    <property type="entry name" value="SAICAR_synthetase_CS"/>
</dbReference>
<dbReference type="NCBIfam" id="TIGR00081">
    <property type="entry name" value="purC"/>
    <property type="match status" value="1"/>
</dbReference>
<dbReference type="PANTHER" id="PTHR43599">
    <property type="entry name" value="MULTIFUNCTIONAL PROTEIN ADE2"/>
    <property type="match status" value="1"/>
</dbReference>
<dbReference type="PANTHER" id="PTHR43599:SF3">
    <property type="entry name" value="SI:DKEY-6E2.2"/>
    <property type="match status" value="1"/>
</dbReference>
<dbReference type="Pfam" id="PF01259">
    <property type="entry name" value="SAICAR_synt"/>
    <property type="match status" value="1"/>
</dbReference>
<dbReference type="SUPFAM" id="SSF56104">
    <property type="entry name" value="SAICAR synthase-like"/>
    <property type="match status" value="1"/>
</dbReference>
<dbReference type="PROSITE" id="PS01057">
    <property type="entry name" value="SAICAR_SYNTHETASE_1"/>
    <property type="match status" value="1"/>
</dbReference>
<dbReference type="PROSITE" id="PS01058">
    <property type="entry name" value="SAICAR_SYNTHETASE_2"/>
    <property type="match status" value="1"/>
</dbReference>
<accession>P0A7D9</accession>
<accession>P21155</accession>
<name>PUR7_ECO57</name>
<proteinExistence type="inferred from homology"/>
<sequence length="237" mass="26995">MQKQAELYRGKAKTVYSTENPDLLVLEFRNDTSAGDGARIEQFDRKGMVNNKFNYFIMSKLAEAGIPTQMERLLSDTECLVKKLDMVPVECVVRNRAAGSLVKRLGIEEGIELNPPLFDLFLKNDAMHDPMVNESYCETFGWVSKENLARMKELTYKANDVLKKLFDDAGLILVDFKLEFGLYKGEVVLGDEFSPDGSRLWDKETLEKMDKDRFRQSLGGLIEAYEAVARRLGVQLD</sequence>
<comment type="catalytic activity">
    <reaction>
        <text>5-amino-1-(5-phospho-D-ribosyl)imidazole-4-carboxylate + L-aspartate + ATP = (2S)-2-[5-amino-1-(5-phospho-beta-D-ribosyl)imidazole-4-carboxamido]succinate + ADP + phosphate + 2 H(+)</text>
        <dbReference type="Rhea" id="RHEA:22628"/>
        <dbReference type="ChEBI" id="CHEBI:15378"/>
        <dbReference type="ChEBI" id="CHEBI:29991"/>
        <dbReference type="ChEBI" id="CHEBI:30616"/>
        <dbReference type="ChEBI" id="CHEBI:43474"/>
        <dbReference type="ChEBI" id="CHEBI:58443"/>
        <dbReference type="ChEBI" id="CHEBI:77657"/>
        <dbReference type="ChEBI" id="CHEBI:456216"/>
        <dbReference type="EC" id="6.3.2.6"/>
    </reaction>
</comment>
<comment type="pathway">
    <text>Purine metabolism; IMP biosynthesis via de novo pathway; 5-amino-1-(5-phospho-D-ribosyl)imidazole-4-carboxamide from 5-amino-1-(5-phospho-D-ribosyl)imidazole-4-carboxylate: step 1/2.</text>
</comment>
<comment type="subunit">
    <text evidence="1">Homotrimer.</text>
</comment>
<comment type="similarity">
    <text evidence="2">Belongs to the SAICAR synthetase family.</text>
</comment>
<gene>
    <name type="primary">purC</name>
    <name type="ordered locus">Z3735</name>
    <name type="ordered locus">ECs3338</name>
</gene>
<keyword id="KW-0067">ATP-binding</keyword>
<keyword id="KW-0436">Ligase</keyword>
<keyword id="KW-0547">Nucleotide-binding</keyword>
<keyword id="KW-0658">Purine biosynthesis</keyword>
<keyword id="KW-1185">Reference proteome</keyword>
<feature type="chain" id="PRO_0000100826" description="Phosphoribosylaminoimidazole-succinocarboxamide synthase">
    <location>
        <begin position="1"/>
        <end position="237"/>
    </location>
</feature>
<organism>
    <name type="scientific">Escherichia coli O157:H7</name>
    <dbReference type="NCBI Taxonomy" id="83334"/>
    <lineage>
        <taxon>Bacteria</taxon>
        <taxon>Pseudomonadati</taxon>
        <taxon>Pseudomonadota</taxon>
        <taxon>Gammaproteobacteria</taxon>
        <taxon>Enterobacterales</taxon>
        <taxon>Enterobacteriaceae</taxon>
        <taxon>Escherichia</taxon>
    </lineage>
</organism>
<evidence type="ECO:0000250" key="1"/>
<evidence type="ECO:0000305" key="2"/>
<protein>
    <recommendedName>
        <fullName>Phosphoribosylaminoimidazole-succinocarboxamide synthase</fullName>
        <ecNumber>6.3.2.6</ecNumber>
    </recommendedName>
    <alternativeName>
        <fullName>SAICAR synthetase</fullName>
    </alternativeName>
</protein>
<reference key="1">
    <citation type="journal article" date="2001" name="Nature">
        <title>Genome sequence of enterohaemorrhagic Escherichia coli O157:H7.</title>
        <authorList>
            <person name="Perna N.T."/>
            <person name="Plunkett G. III"/>
            <person name="Burland V."/>
            <person name="Mau B."/>
            <person name="Glasner J.D."/>
            <person name="Rose D.J."/>
            <person name="Mayhew G.F."/>
            <person name="Evans P.S."/>
            <person name="Gregor J."/>
            <person name="Kirkpatrick H.A."/>
            <person name="Posfai G."/>
            <person name="Hackett J."/>
            <person name="Klink S."/>
            <person name="Boutin A."/>
            <person name="Shao Y."/>
            <person name="Miller L."/>
            <person name="Grotbeck E.J."/>
            <person name="Davis N.W."/>
            <person name="Lim A."/>
            <person name="Dimalanta E.T."/>
            <person name="Potamousis K."/>
            <person name="Apodaca J."/>
            <person name="Anantharaman T.S."/>
            <person name="Lin J."/>
            <person name="Yen G."/>
            <person name="Schwartz D.C."/>
            <person name="Welch R.A."/>
            <person name="Blattner F.R."/>
        </authorList>
    </citation>
    <scope>NUCLEOTIDE SEQUENCE [LARGE SCALE GENOMIC DNA]</scope>
    <source>
        <strain>O157:H7 / EDL933 / ATCC 700927 / EHEC</strain>
    </source>
</reference>
<reference key="2">
    <citation type="journal article" date="2001" name="DNA Res.">
        <title>Complete genome sequence of enterohemorrhagic Escherichia coli O157:H7 and genomic comparison with a laboratory strain K-12.</title>
        <authorList>
            <person name="Hayashi T."/>
            <person name="Makino K."/>
            <person name="Ohnishi M."/>
            <person name="Kurokawa K."/>
            <person name="Ishii K."/>
            <person name="Yokoyama K."/>
            <person name="Han C.-G."/>
            <person name="Ohtsubo E."/>
            <person name="Nakayama K."/>
            <person name="Murata T."/>
            <person name="Tanaka M."/>
            <person name="Tobe T."/>
            <person name="Iida T."/>
            <person name="Takami H."/>
            <person name="Honda T."/>
            <person name="Sasakawa C."/>
            <person name="Ogasawara N."/>
            <person name="Yasunaga T."/>
            <person name="Kuhara S."/>
            <person name="Shiba T."/>
            <person name="Hattori M."/>
            <person name="Shinagawa H."/>
        </authorList>
    </citation>
    <scope>NUCLEOTIDE SEQUENCE [LARGE SCALE GENOMIC DNA]</scope>
    <source>
        <strain>O157:H7 / Sakai / RIMD 0509952 / EHEC</strain>
    </source>
</reference>